<reference key="1">
    <citation type="journal article" date="2002" name="DNA Res.">
        <title>Complete genome structure of the thermophilic cyanobacterium Thermosynechococcus elongatus BP-1.</title>
        <authorList>
            <person name="Nakamura Y."/>
            <person name="Kaneko T."/>
            <person name="Sato S."/>
            <person name="Ikeuchi M."/>
            <person name="Katoh H."/>
            <person name="Sasamoto S."/>
            <person name="Watanabe A."/>
            <person name="Iriguchi M."/>
            <person name="Kawashima K."/>
            <person name="Kimura T."/>
            <person name="Kishida Y."/>
            <person name="Kiyokawa C."/>
            <person name="Kohara M."/>
            <person name="Matsumoto M."/>
            <person name="Matsuno A."/>
            <person name="Nakazaki N."/>
            <person name="Shimpo S."/>
            <person name="Sugimoto M."/>
            <person name="Takeuchi C."/>
            <person name="Yamada M."/>
            <person name="Tabata S."/>
        </authorList>
    </citation>
    <scope>NUCLEOTIDE SEQUENCE [LARGE SCALE GENOMIC DNA]</scope>
    <source>
        <strain>NIES-2133 / IAM M-273 / BP-1</strain>
    </source>
</reference>
<reference key="2">
    <citation type="journal article" date="1996" name="Nat. Struct. Biol.">
        <title>Photosystem I at 4-A resolution represents the first structural model of a joint photosynthetic reaction centre and core antenna system.</title>
        <authorList>
            <person name="Krauss N."/>
            <person name="Schubert W.-D."/>
            <person name="Klukas O."/>
            <person name="Fromme P."/>
            <person name="Witt H.T."/>
            <person name="Saenger W."/>
        </authorList>
    </citation>
    <scope>X-RAY CRYSTALLOGRAPHY (4.0 ANGSTROMS)</scope>
</reference>
<reference key="3">
    <citation type="journal article" date="1999" name="J. Biol. Chem.">
        <title>Photosystem I, an improved model of the stromal subunits PsaC, PsaD, and PsaE.</title>
        <authorList>
            <person name="Klukas O."/>
            <person name="Schubert W.-D."/>
            <person name="Jordan P."/>
            <person name="Krauss N."/>
            <person name="Fromme P."/>
            <person name="Witt H.T."/>
            <person name="Saenger W."/>
        </authorList>
    </citation>
    <scope>X-RAY CRYSTALLOGRAPHY (4.0 ANGSTROMS)</scope>
</reference>
<reference key="4">
    <citation type="journal article" date="2001" name="Nature">
        <title>Three-dimensional structure of cyanobacterial photosystem I at 2.5 A resolution.</title>
        <authorList>
            <person name="Jordan P."/>
            <person name="Fromme P."/>
            <person name="Witt H.T."/>
            <person name="Klukas O."/>
            <person name="Saenger W."/>
            <person name="Krauss N."/>
        </authorList>
    </citation>
    <scope>X-RAY CRYSTALLOGRAPHY (2.5 ANGSTROMS)</scope>
</reference>
<evidence type="ECO:0000250" key="1"/>
<evidence type="ECO:0000256" key="2">
    <source>
        <dbReference type="SAM" id="MobiDB-lite"/>
    </source>
</evidence>
<evidence type="ECO:0000305" key="3"/>
<evidence type="ECO:0007829" key="4">
    <source>
        <dbReference type="PDB" id="1JB0"/>
    </source>
</evidence>
<evidence type="ECO:0007829" key="5">
    <source>
        <dbReference type="PDB" id="6LU1"/>
    </source>
</evidence>
<evidence type="ECO:0007829" key="6">
    <source>
        <dbReference type="PDB" id="6TRA"/>
    </source>
</evidence>
<sequence length="139" mass="15371">MTTLTGQPPLYGGSTGGLLSAADTEEKYAITWTSPKEQVFEMPTAGAAVMREGENLVYFARKEQCLALAAQQLRPRKINDYKIYRIFPDGETVLIHPKDGVFPEKVNKGREAVNSVPRSIGQNPNPSQLKFTGKKPYDP</sequence>
<dbReference type="EMBL" id="BA000039">
    <property type="protein sequence ID" value="BAC09276.1"/>
    <property type="molecule type" value="Genomic_DNA"/>
</dbReference>
<dbReference type="RefSeq" id="NP_682514.1">
    <property type="nucleotide sequence ID" value="NC_004113.1"/>
</dbReference>
<dbReference type="RefSeq" id="WP_011057561.1">
    <property type="nucleotide sequence ID" value="NC_004113.1"/>
</dbReference>
<dbReference type="PDB" id="1C51">
    <property type="method" value="X-ray"/>
    <property type="resolution" value="4.00 A"/>
</dbReference>
<dbReference type="PDB" id="1JB0">
    <property type="method" value="X-ray"/>
    <property type="resolution" value="2.50 A"/>
    <property type="chains" value="D=2-139"/>
</dbReference>
<dbReference type="PDB" id="2PPS">
    <property type="method" value="X-ray"/>
    <property type="resolution" value="4.00 A"/>
</dbReference>
<dbReference type="PDB" id="3PCQ">
    <property type="method" value="X-ray"/>
    <property type="resolution" value="8.98 A"/>
    <property type="chains" value="D=2-139"/>
</dbReference>
<dbReference type="PDB" id="4FE1">
    <property type="method" value="X-ray"/>
    <property type="resolution" value="4.92 A"/>
    <property type="chains" value="D=2-139"/>
</dbReference>
<dbReference type="PDB" id="5ZF0">
    <property type="method" value="X-ray"/>
    <property type="resolution" value="4.20 A"/>
    <property type="chains" value="D1/D2/D3/D4/D5/D6=2-139"/>
</dbReference>
<dbReference type="PDB" id="6LU1">
    <property type="method" value="EM"/>
    <property type="resolution" value="3.20 A"/>
    <property type="chains" value="D=1-139"/>
</dbReference>
<dbReference type="PDB" id="6PFY">
    <property type="method" value="X-ray"/>
    <property type="resolution" value="2.90 A"/>
    <property type="chains" value="D/O/b=1-139"/>
</dbReference>
<dbReference type="PDB" id="6PGK">
    <property type="method" value="X-ray"/>
    <property type="resolution" value="2.90 A"/>
    <property type="chains" value="D/O/b=1-139"/>
</dbReference>
<dbReference type="PDB" id="6TRA">
    <property type="method" value="EM"/>
    <property type="resolution" value="2.85 A"/>
    <property type="chains" value="D=1-139"/>
</dbReference>
<dbReference type="PDB" id="6TRC">
    <property type="method" value="EM"/>
    <property type="resolution" value="2.98 A"/>
    <property type="chains" value="4/D/d=1-139"/>
</dbReference>
<dbReference type="PDB" id="6TRD">
    <property type="method" value="EM"/>
    <property type="resolution" value="3.16 A"/>
    <property type="chains" value="4/D/d=1-139"/>
</dbReference>
<dbReference type="PDB" id="7BW2">
    <property type="method" value="X-ray"/>
    <property type="resolution" value="6.50 A"/>
    <property type="chains" value="D=1-139"/>
</dbReference>
<dbReference type="PDB" id="7FIX">
    <property type="method" value="EM"/>
    <property type="resolution" value="1.97 A"/>
    <property type="chains" value="D1/D2/D3=1-139"/>
</dbReference>
<dbReference type="PDB" id="7M75">
    <property type="method" value="X-ray"/>
    <property type="resolution" value="2.75 A"/>
    <property type="chains" value="D=2-139"/>
</dbReference>
<dbReference type="PDB" id="7M76">
    <property type="method" value="X-ray"/>
    <property type="resolution" value="3.00 A"/>
    <property type="chains" value="D=2-139"/>
</dbReference>
<dbReference type="PDB" id="7M78">
    <property type="method" value="X-ray"/>
    <property type="resolution" value="3.00 A"/>
    <property type="chains" value="D=2-139"/>
</dbReference>
<dbReference type="PDBsum" id="1C51"/>
<dbReference type="PDBsum" id="1JB0"/>
<dbReference type="PDBsum" id="2PPS"/>
<dbReference type="PDBsum" id="3PCQ"/>
<dbReference type="PDBsum" id="4FE1"/>
<dbReference type="PDBsum" id="5ZF0"/>
<dbReference type="PDBsum" id="6LU1"/>
<dbReference type="PDBsum" id="6PFY"/>
<dbReference type="PDBsum" id="6PGK"/>
<dbReference type="PDBsum" id="6TRA"/>
<dbReference type="PDBsum" id="6TRC"/>
<dbReference type="PDBsum" id="6TRD"/>
<dbReference type="PDBsum" id="7BW2"/>
<dbReference type="PDBsum" id="7FIX"/>
<dbReference type="PDBsum" id="7M75"/>
<dbReference type="PDBsum" id="7M76"/>
<dbReference type="PDBsum" id="7M78"/>
<dbReference type="EMDB" id="EMD-0977"/>
<dbReference type="EMDB" id="EMD-10557"/>
<dbReference type="EMDB" id="EMD-10558"/>
<dbReference type="EMDB" id="EMD-10559"/>
<dbReference type="EMDB" id="EMD-31605"/>
<dbReference type="SMR" id="P0A420"/>
<dbReference type="IntAct" id="P0A420">
    <property type="interactions" value="2"/>
</dbReference>
<dbReference type="STRING" id="197221.gene:10748328"/>
<dbReference type="EnsemblBacteria" id="BAC09276">
    <property type="protein sequence ID" value="BAC09276"/>
    <property type="gene ID" value="BAC09276"/>
</dbReference>
<dbReference type="KEGG" id="tel:tll1724"/>
<dbReference type="PATRIC" id="fig|197221.4.peg.1805"/>
<dbReference type="eggNOG" id="ENOG502ZBN6">
    <property type="taxonomic scope" value="Bacteria"/>
</dbReference>
<dbReference type="EvolutionaryTrace" id="P0A420"/>
<dbReference type="Proteomes" id="UP000000440">
    <property type="component" value="Chromosome"/>
</dbReference>
<dbReference type="GO" id="GO:0009538">
    <property type="term" value="C:photosystem I reaction center"/>
    <property type="evidence" value="ECO:0007669"/>
    <property type="project" value="InterPro"/>
</dbReference>
<dbReference type="GO" id="GO:0015979">
    <property type="term" value="P:photosynthesis"/>
    <property type="evidence" value="ECO:0007669"/>
    <property type="project" value="UniProtKB-KW"/>
</dbReference>
<dbReference type="Gene3D" id="3.30.1470.10">
    <property type="entry name" value="Photosystem I PsaD, reaction center subunit II"/>
    <property type="match status" value="1"/>
</dbReference>
<dbReference type="InterPro" id="IPR003685">
    <property type="entry name" value="PsaD"/>
</dbReference>
<dbReference type="InterPro" id="IPR036579">
    <property type="entry name" value="PsaD_sf"/>
</dbReference>
<dbReference type="PANTHER" id="PTHR31982:SF5">
    <property type="entry name" value="PHOTOSYSTEM I REACTION CENTER SUBUNIT II, CHLOROPLASTIC"/>
    <property type="match status" value="1"/>
</dbReference>
<dbReference type="PANTHER" id="PTHR31982">
    <property type="entry name" value="PHOTOSYSTEM I REACTION CENTER SUBUNIT II-1, CHLOROPLASTIC-RELATED"/>
    <property type="match status" value="1"/>
</dbReference>
<dbReference type="Pfam" id="PF02531">
    <property type="entry name" value="PsaD"/>
    <property type="match status" value="1"/>
</dbReference>
<dbReference type="SUPFAM" id="SSF64234">
    <property type="entry name" value="Photosystem I subunit PsaD"/>
    <property type="match status" value="1"/>
</dbReference>
<keyword id="KW-0002">3D-structure</keyword>
<keyword id="KW-0602">Photosynthesis</keyword>
<keyword id="KW-0603">Photosystem I</keyword>
<keyword id="KW-1185">Reference proteome</keyword>
<organism>
    <name type="scientific">Thermosynechococcus vestitus (strain NIES-2133 / IAM M-273 / BP-1)</name>
    <dbReference type="NCBI Taxonomy" id="197221"/>
    <lineage>
        <taxon>Bacteria</taxon>
        <taxon>Bacillati</taxon>
        <taxon>Cyanobacteriota</taxon>
        <taxon>Cyanophyceae</taxon>
        <taxon>Acaryochloridales</taxon>
        <taxon>Thermosynechococcaceae</taxon>
        <taxon>Thermosynechococcus</taxon>
    </lineage>
</organism>
<name>PSAD_THEVB</name>
<gene>
    <name type="primary">psaD</name>
    <name type="ordered locus">tll1724</name>
</gene>
<feature type="initiator methionine" description="Removed" evidence="1">
    <location>
        <position position="1"/>
    </location>
</feature>
<feature type="chain" id="PRO_0000206054" description="Photosystem I reaction center subunit II">
    <location>
        <begin position="2"/>
        <end position="139"/>
    </location>
</feature>
<feature type="region of interest" description="Disordered" evidence="2">
    <location>
        <begin position="113"/>
        <end position="139"/>
    </location>
</feature>
<feature type="compositionally biased region" description="Polar residues" evidence="2">
    <location>
        <begin position="116"/>
        <end position="130"/>
    </location>
</feature>
<feature type="strand" evidence="6">
    <location>
        <begin position="14"/>
        <end position="18"/>
    </location>
</feature>
<feature type="helix" evidence="4">
    <location>
        <begin position="21"/>
        <end position="24"/>
    </location>
</feature>
<feature type="strand" evidence="4">
    <location>
        <begin position="27"/>
        <end position="36"/>
    </location>
</feature>
<feature type="strand" evidence="4">
    <location>
        <begin position="38"/>
        <end position="41"/>
    </location>
</feature>
<feature type="strand" evidence="4">
    <location>
        <begin position="45"/>
        <end position="50"/>
    </location>
</feature>
<feature type="strand" evidence="4">
    <location>
        <begin position="52"/>
        <end position="61"/>
    </location>
</feature>
<feature type="helix" evidence="4">
    <location>
        <begin position="62"/>
        <end position="72"/>
    </location>
</feature>
<feature type="helix" evidence="4">
    <location>
        <begin position="74"/>
        <end position="76"/>
    </location>
</feature>
<feature type="strand" evidence="4">
    <location>
        <begin position="82"/>
        <end position="86"/>
    </location>
</feature>
<feature type="turn" evidence="5">
    <location>
        <begin position="88"/>
        <end position="90"/>
    </location>
</feature>
<feature type="strand" evidence="4">
    <location>
        <begin position="92"/>
        <end position="96"/>
    </location>
</feature>
<feature type="turn" evidence="4">
    <location>
        <begin position="97"/>
        <end position="99"/>
    </location>
</feature>
<feature type="strand" evidence="4">
    <location>
        <begin position="103"/>
        <end position="105"/>
    </location>
</feature>
<feature type="strand" evidence="4">
    <location>
        <begin position="114"/>
        <end position="118"/>
    </location>
</feature>
<feature type="helix" evidence="4">
    <location>
        <begin position="120"/>
        <end position="122"/>
    </location>
</feature>
<feature type="helix" evidence="4">
    <location>
        <begin position="126"/>
        <end position="129"/>
    </location>
</feature>
<protein>
    <recommendedName>
        <fullName>Photosystem I reaction center subunit II</fullName>
    </recommendedName>
    <alternativeName>
        <fullName>Photosystem I 16 kDa polypeptide</fullName>
        <shortName>PSI-D</shortName>
    </alternativeName>
</protein>
<proteinExistence type="evidence at protein level"/>
<comment type="function">
    <text evidence="1">PsaD can form complexes with ferredoxin and ferredoxin-oxidoreductase in photosystem I (PS I) reaction center.</text>
</comment>
<comment type="similarity">
    <text evidence="3">Belongs to the PsaD family.</text>
</comment>
<accession>P0A420</accession>
<accession>P20452</accession>
<accession>P20899</accession>